<dbReference type="EC" id="2.1.3.-" evidence="6"/>
<dbReference type="EMBL" id="LC086931">
    <property type="protein sequence ID" value="BBG28502.1"/>
    <property type="molecule type" value="Genomic_DNA"/>
</dbReference>
<dbReference type="SMR" id="A0A348HAY0"/>
<dbReference type="GO" id="GO:0008168">
    <property type="term" value="F:methyltransferase activity"/>
    <property type="evidence" value="ECO:0007669"/>
    <property type="project" value="UniProtKB-KW"/>
</dbReference>
<dbReference type="GO" id="GO:0032259">
    <property type="term" value="P:methylation"/>
    <property type="evidence" value="ECO:0007669"/>
    <property type="project" value="UniProtKB-KW"/>
</dbReference>
<dbReference type="Gene3D" id="3.40.50.150">
    <property type="entry name" value="Vaccinia Virus protein VP39"/>
    <property type="match status" value="1"/>
</dbReference>
<dbReference type="InterPro" id="IPR051654">
    <property type="entry name" value="Meroterpenoid_MTases"/>
</dbReference>
<dbReference type="InterPro" id="IPR041698">
    <property type="entry name" value="Methyltransf_25"/>
</dbReference>
<dbReference type="InterPro" id="IPR029063">
    <property type="entry name" value="SAM-dependent_MTases_sf"/>
</dbReference>
<dbReference type="PANTHER" id="PTHR35897">
    <property type="entry name" value="METHYLTRANSFERASE AUSD"/>
    <property type="match status" value="1"/>
</dbReference>
<dbReference type="PANTHER" id="PTHR35897:SF1">
    <property type="entry name" value="METHYLTRANSFERASE AUSD"/>
    <property type="match status" value="1"/>
</dbReference>
<dbReference type="Pfam" id="PF13649">
    <property type="entry name" value="Methyltransf_25"/>
    <property type="match status" value="1"/>
</dbReference>
<dbReference type="SUPFAM" id="SSF53335">
    <property type="entry name" value="S-adenosyl-L-methionine-dependent methyltransferases"/>
    <property type="match status" value="1"/>
</dbReference>
<evidence type="ECO:0000250" key="1">
    <source>
        <dbReference type="UniProtKB" id="Q3J7D1"/>
    </source>
</evidence>
<evidence type="ECO:0000269" key="2">
    <source>
    </source>
</evidence>
<evidence type="ECO:0000269" key="3">
    <source>
    </source>
</evidence>
<evidence type="ECO:0000303" key="4">
    <source>
    </source>
</evidence>
<evidence type="ECO:0000305" key="5"/>
<evidence type="ECO:0000305" key="6">
    <source>
    </source>
</evidence>
<evidence type="ECO:0000305" key="7">
    <source>
    </source>
</evidence>
<organism>
    <name type="scientific">Fungal sp. (strain ATCC 74256)</name>
    <dbReference type="NCBI Taxonomy" id="1729595"/>
    <lineage>
        <taxon>Eukaryota</taxon>
        <taxon>Fungi</taxon>
    </lineage>
</organism>
<protein>
    <recommendedName>
        <fullName evidence="4">O-methyltransferase phiE</fullName>
        <ecNumber evidence="6">2.1.3.-</ecNumber>
    </recommendedName>
    <alternativeName>
        <fullName evidence="4">Phomoidride biosynthesis cluster protein E</fullName>
    </alternativeName>
</protein>
<comment type="function">
    <text evidence="2 7">O-methyltransferase; part of the gene cluster that mediates the biosynthesis of the antihypercholesterolemic agents phomoidrides which are dimeric anhydrides (PubMed:26558485). Within the pathway, phiE catalyzes the acetalization reaction that converts phomoidride A to phomoidride B (Probable). The pathway begins with the highly reducing polyketide synthase phiA that catalyzes the formation of a C12-fatty acyl-ACP, starting from one acetate and 5 malonate units. The hydrolase phiM is involved in the release of the C12-fatty acyl chain from phiA. The alkylcitrate synthase (ACS) phiJ and the alkylcitrate dehydratase (ACDH) phiI then give rise to decarboxylated monomeric anhydrides by coupling the C12-fatty acyl chain with oxalacetic acid. The cyclase phiC is responsible for the dimerization of the monomeric anhydrides which leads to the production of prephomoidride that contains the characteristic bicyclo[4.3.1]deca-1,6-diene system of phomoidrides. Iterative oxidation catalyzed by the alpha-ketoglutarate-dependent dioxygenase phiK produced then phomoidride A. Finally, the methyltransferase phiE converts phomoidride A to phomoidride B via an acetalization reaction. The phosphatidylethanolamine-binding protein phiB and phiN are not essential for dimerization and their functions have still to be determined (Probable).</text>
</comment>
<comment type="catalytic activity">
    <reaction evidence="7">
        <text>phomoidride A + S-adenosyl-L-methionine = (-)-phomoidride B + methanol + S-adenosyl-L-homocysteine + H(+)</text>
        <dbReference type="Rhea" id="RHEA:77659"/>
        <dbReference type="ChEBI" id="CHEBI:15378"/>
        <dbReference type="ChEBI" id="CHEBI:17790"/>
        <dbReference type="ChEBI" id="CHEBI:57856"/>
        <dbReference type="ChEBI" id="CHEBI:59789"/>
        <dbReference type="ChEBI" id="CHEBI:197432"/>
        <dbReference type="ChEBI" id="CHEBI:197433"/>
    </reaction>
    <physiologicalReaction direction="left-to-right" evidence="7">
        <dbReference type="Rhea" id="RHEA:77660"/>
    </physiologicalReaction>
</comment>
<comment type="pathway">
    <text evidence="7">Secondary metabolite biosynthesis.</text>
</comment>
<comment type="subunit">
    <text evidence="1">Homodimer.</text>
</comment>
<comment type="biotechnology">
    <text evidence="3">Phomoidrides A and B (also known as CP-225,917 and CP-263,114) are potent inhibitors of Ras farnesyltransferase and squalene synthase (PubMed:9066758). CP-225,917 and CP-263,114 inhibit Ras farnesyl transferase from rat brain with IC(50) values of 6 uM and 20 uoM, respectively (PubMed:9066758). CP-225,917 inhibits squalene synthase with an IC(50) value of 43 uM and CP-263,114 with an IC(50) of 160 uM (PubMed:9066758).</text>
</comment>
<comment type="similarity">
    <text evidence="5">Belongs to the class I-like SAM-binding methyltransferase superfamily.</text>
</comment>
<keyword id="KW-0489">Methyltransferase</keyword>
<keyword id="KW-0949">S-adenosyl-L-methionine</keyword>
<keyword id="KW-0808">Transferase</keyword>
<proteinExistence type="evidence at protein level"/>
<reference key="1">
    <citation type="journal article" date="2015" name="Org. Lett.">
        <title>Biosynthetic study on antihypercholesterolemic agent phomoidride: general biogenesis of fungal dimeric anhydrides.</title>
        <authorList>
            <person name="Fujii R."/>
            <person name="Matsu Y."/>
            <person name="Minami A."/>
            <person name="Nagamine S."/>
            <person name="Takeuchi I."/>
            <person name="Gomi K."/>
            <person name="Oikawa H."/>
        </authorList>
    </citation>
    <scope>NUCLEOTIDE SEQUENCE [GENOMIC DNA]</scope>
    <scope>FUNCTION</scope>
    <source>
        <strain>ATCC 74256</strain>
    </source>
</reference>
<reference key="2">
    <citation type="journal article" date="1997" name="J. Antibiot.">
        <title>CP-225,917 and CP-263,114, novel Ras farnesylation inhibitors from an unidentified fungus. I. Taxonomy, fermentation, isolation, and biochemical properties.</title>
        <authorList>
            <person name="Dabrah T.T."/>
            <person name="Harwood H.J. Jr."/>
            <person name="Huang L.H."/>
            <person name="Jankovich N.D."/>
            <person name="Kaneko T."/>
            <person name="Li J.C."/>
            <person name="Lindsey S."/>
            <person name="Moshier P.M."/>
            <person name="Subashi T.A."/>
            <person name="Therrien M."/>
            <person name="Watts P.C."/>
        </authorList>
    </citation>
    <scope>BIOTECHNOLOGY</scope>
</reference>
<reference key="3">
    <citation type="journal article" date="2022" name="J. Am. Chem. Soc.">
        <title>Elucidation of late-stage biosynthesis of phomoidride: proposal of cyclization mechanism affording characteristic nine-membered ring of fungal dimeric anhydride.</title>
        <authorList>
            <person name="Yamamoto S."/>
            <person name="Matsuyama T."/>
            <person name="Ozaki T."/>
            <person name="Takino J."/>
            <person name="Sato H."/>
            <person name="Uchiyama M."/>
            <person name="Minami A."/>
            <person name="Oikawa H."/>
        </authorList>
    </citation>
    <scope>FUNCTION</scope>
</reference>
<sequence>MSAPTVVGQRDPEKAWAYKKDVAWYRTELSEETIGPMRPILELYSKVPPESVVEWIKTVRDKAWEVYPYGTIGMFGFLTLSLPTHPSYPDILASLQSGKKTFLDIGCCVGQELRSLTYAGVPSENLYGVDLHQGFLDIGYELFRDSETLKSTLLAADVFDENSEVLKDVEGKIDVVHAGSFFHLFDWDQQVTAAKRVVRLLRPQPGSILVGKQAGDVNAGQKSRPGKLGSRYRHNAESWKKLWQQVAAETGTQWEVSVRELEDKEYFREMTGGVDLAKVKSYGDWNPETTRRIEFLFRRA</sequence>
<gene>
    <name evidence="4" type="primary">phiE</name>
</gene>
<feature type="chain" id="PRO_0000458950" description="O-methyltransferase phiE">
    <location>
        <begin position="1"/>
        <end position="300"/>
    </location>
</feature>
<feature type="binding site" evidence="1">
    <location>
        <begin position="130"/>
        <end position="131"/>
    </location>
    <ligand>
        <name>S-adenosyl-L-methionine</name>
        <dbReference type="ChEBI" id="CHEBI:59789"/>
    </ligand>
</feature>
<feature type="binding site" evidence="1">
    <location>
        <begin position="157"/>
        <end position="158"/>
    </location>
    <ligand>
        <name>S-adenosyl-L-methionine</name>
        <dbReference type="ChEBI" id="CHEBI:59789"/>
    </ligand>
</feature>
<name>PHIE_FUNX7</name>
<accession>A0A348HAY0</accession>